<proteinExistence type="inferred from homology"/>
<keyword id="KW-1185">Reference proteome</keyword>
<keyword id="KW-0687">Ribonucleoprotein</keyword>
<keyword id="KW-0689">Ribosomal protein</keyword>
<keyword id="KW-0694">RNA-binding</keyword>
<keyword id="KW-0699">rRNA-binding</keyword>
<evidence type="ECO:0000255" key="1">
    <source>
        <dbReference type="HAMAP-Rule" id="MF_01331"/>
    </source>
</evidence>
<evidence type="ECO:0000305" key="2"/>
<dbReference type="EMBL" id="AE004439">
    <property type="protein sequence ID" value="AAK03494.1"/>
    <property type="molecule type" value="Genomic_DNA"/>
</dbReference>
<dbReference type="RefSeq" id="WP_005754962.1">
    <property type="nucleotide sequence ID" value="NC_002663.1"/>
</dbReference>
<dbReference type="SMR" id="Q9CL36"/>
<dbReference type="STRING" id="272843.PM1410"/>
<dbReference type="EnsemblBacteria" id="AAK03494">
    <property type="protein sequence ID" value="AAK03494"/>
    <property type="gene ID" value="PM1410"/>
</dbReference>
<dbReference type="GeneID" id="86154467"/>
<dbReference type="KEGG" id="pmu:PM1410"/>
<dbReference type="PATRIC" id="fig|272843.6.peg.1422"/>
<dbReference type="HOGENOM" id="CLU_083987_3_3_6"/>
<dbReference type="OrthoDB" id="9805969at2"/>
<dbReference type="Proteomes" id="UP000000809">
    <property type="component" value="Chromosome"/>
</dbReference>
<dbReference type="GO" id="GO:0022625">
    <property type="term" value="C:cytosolic large ribosomal subunit"/>
    <property type="evidence" value="ECO:0007669"/>
    <property type="project" value="TreeGrafter"/>
</dbReference>
<dbReference type="GO" id="GO:0019843">
    <property type="term" value="F:rRNA binding"/>
    <property type="evidence" value="ECO:0007669"/>
    <property type="project" value="UniProtKB-UniRule"/>
</dbReference>
<dbReference type="GO" id="GO:0003735">
    <property type="term" value="F:structural constituent of ribosome"/>
    <property type="evidence" value="ECO:0007669"/>
    <property type="project" value="InterPro"/>
</dbReference>
<dbReference type="GO" id="GO:0006412">
    <property type="term" value="P:translation"/>
    <property type="evidence" value="ECO:0007669"/>
    <property type="project" value="UniProtKB-UniRule"/>
</dbReference>
<dbReference type="CDD" id="cd00336">
    <property type="entry name" value="Ribosomal_L22"/>
    <property type="match status" value="1"/>
</dbReference>
<dbReference type="FunFam" id="3.90.470.10:FF:000001">
    <property type="entry name" value="50S ribosomal protein L22"/>
    <property type="match status" value="1"/>
</dbReference>
<dbReference type="Gene3D" id="3.90.470.10">
    <property type="entry name" value="Ribosomal protein L22/L17"/>
    <property type="match status" value="1"/>
</dbReference>
<dbReference type="HAMAP" id="MF_01331_B">
    <property type="entry name" value="Ribosomal_uL22_B"/>
    <property type="match status" value="1"/>
</dbReference>
<dbReference type="InterPro" id="IPR001063">
    <property type="entry name" value="Ribosomal_uL22"/>
</dbReference>
<dbReference type="InterPro" id="IPR005727">
    <property type="entry name" value="Ribosomal_uL22_bac/chlpt-type"/>
</dbReference>
<dbReference type="InterPro" id="IPR047867">
    <property type="entry name" value="Ribosomal_uL22_bac/org-type"/>
</dbReference>
<dbReference type="InterPro" id="IPR018260">
    <property type="entry name" value="Ribosomal_uL22_CS"/>
</dbReference>
<dbReference type="InterPro" id="IPR036394">
    <property type="entry name" value="Ribosomal_uL22_sf"/>
</dbReference>
<dbReference type="NCBIfam" id="TIGR01044">
    <property type="entry name" value="rplV_bact"/>
    <property type="match status" value="1"/>
</dbReference>
<dbReference type="PANTHER" id="PTHR13501">
    <property type="entry name" value="CHLOROPLAST 50S RIBOSOMAL PROTEIN L22-RELATED"/>
    <property type="match status" value="1"/>
</dbReference>
<dbReference type="PANTHER" id="PTHR13501:SF8">
    <property type="entry name" value="LARGE RIBOSOMAL SUBUNIT PROTEIN UL22M"/>
    <property type="match status" value="1"/>
</dbReference>
<dbReference type="Pfam" id="PF00237">
    <property type="entry name" value="Ribosomal_L22"/>
    <property type="match status" value="1"/>
</dbReference>
<dbReference type="SUPFAM" id="SSF54843">
    <property type="entry name" value="Ribosomal protein L22"/>
    <property type="match status" value="1"/>
</dbReference>
<dbReference type="PROSITE" id="PS00464">
    <property type="entry name" value="RIBOSOMAL_L22"/>
    <property type="match status" value="1"/>
</dbReference>
<reference key="1">
    <citation type="journal article" date="2001" name="Proc. Natl. Acad. Sci. U.S.A.">
        <title>Complete genomic sequence of Pasteurella multocida Pm70.</title>
        <authorList>
            <person name="May B.J."/>
            <person name="Zhang Q."/>
            <person name="Li L.L."/>
            <person name="Paustian M.L."/>
            <person name="Whittam T.S."/>
            <person name="Kapur V."/>
        </authorList>
    </citation>
    <scope>NUCLEOTIDE SEQUENCE [LARGE SCALE GENOMIC DNA]</scope>
    <source>
        <strain>Pm70</strain>
    </source>
</reference>
<sequence>METIAKHRYARTSAQKARLVADLIRGKKVAAALEILTFTNKKAAALVKKVLESAIANAEHNDGADIDDLKVAKIFVDEGPSMKRVMPRAKGRADRILKRTSHITVVVSDR</sequence>
<gene>
    <name evidence="1" type="primary">rplV</name>
    <name evidence="1" type="synonym">rpl22</name>
    <name type="ordered locus">PM1410</name>
</gene>
<name>RL22_PASMU</name>
<protein>
    <recommendedName>
        <fullName evidence="1">Large ribosomal subunit protein uL22</fullName>
    </recommendedName>
    <alternativeName>
        <fullName evidence="2">50S ribosomal protein L22</fullName>
    </alternativeName>
</protein>
<organism>
    <name type="scientific">Pasteurella multocida (strain Pm70)</name>
    <dbReference type="NCBI Taxonomy" id="272843"/>
    <lineage>
        <taxon>Bacteria</taxon>
        <taxon>Pseudomonadati</taxon>
        <taxon>Pseudomonadota</taxon>
        <taxon>Gammaproteobacteria</taxon>
        <taxon>Pasteurellales</taxon>
        <taxon>Pasteurellaceae</taxon>
        <taxon>Pasteurella</taxon>
    </lineage>
</organism>
<accession>Q9CL36</accession>
<feature type="chain" id="PRO_0000125194" description="Large ribosomal subunit protein uL22">
    <location>
        <begin position="1"/>
        <end position="110"/>
    </location>
</feature>
<comment type="function">
    <text evidence="1">This protein binds specifically to 23S rRNA; its binding is stimulated by other ribosomal proteins, e.g. L4, L17, and L20. It is important during the early stages of 50S assembly. It makes multiple contacts with different domains of the 23S rRNA in the assembled 50S subunit and ribosome (By similarity).</text>
</comment>
<comment type="function">
    <text evidence="1">The globular domain of the protein is located near the polypeptide exit tunnel on the outside of the subunit, while an extended beta-hairpin is found that lines the wall of the exit tunnel in the center of the 70S ribosome.</text>
</comment>
<comment type="subunit">
    <text evidence="1">Part of the 50S ribosomal subunit.</text>
</comment>
<comment type="similarity">
    <text evidence="1">Belongs to the universal ribosomal protein uL22 family.</text>
</comment>